<organism>
    <name type="scientific">Purpureocillium lilacinum</name>
    <name type="common">Paecilomyces lilacinus</name>
    <dbReference type="NCBI Taxonomy" id="33203"/>
    <lineage>
        <taxon>Eukaryota</taxon>
        <taxon>Fungi</taxon>
        <taxon>Dikarya</taxon>
        <taxon>Ascomycota</taxon>
        <taxon>Pezizomycotina</taxon>
        <taxon>Sordariomycetes</taxon>
        <taxon>Hypocreomycetidae</taxon>
        <taxon>Hypocreales</taxon>
        <taxon>Ophiocordycipitaceae</taxon>
        <taxon>Purpureocillium</taxon>
    </lineage>
</organism>
<dbReference type="EC" id="1.-.-.-" evidence="7"/>
<dbReference type="EMBL" id="LSBH01000002">
    <property type="protein sequence ID" value="OAQ83757.1"/>
    <property type="molecule type" value="Genomic_DNA"/>
</dbReference>
<dbReference type="EMBL" id="LSBI01000004">
    <property type="protein sequence ID" value="OAQ90537.1"/>
    <property type="molecule type" value="Genomic_DNA"/>
</dbReference>
<dbReference type="RefSeq" id="XP_018179256.1">
    <property type="nucleotide sequence ID" value="XM_018321777.1"/>
</dbReference>
<dbReference type="SMR" id="A0A179HJU2"/>
<dbReference type="STRING" id="33203.A0A179HJU2"/>
<dbReference type="GlyCosmos" id="A0A179HJU2">
    <property type="glycosylation" value="4 sites, No reported glycans"/>
</dbReference>
<dbReference type="GeneID" id="28886826"/>
<dbReference type="KEGG" id="plj:28886826"/>
<dbReference type="OMA" id="ELTWRVK"/>
<dbReference type="Proteomes" id="UP000078240">
    <property type="component" value="Unassembled WGS sequence"/>
</dbReference>
<dbReference type="Proteomes" id="UP000078340">
    <property type="component" value="Unassembled WGS sequence"/>
</dbReference>
<dbReference type="GO" id="GO:0016020">
    <property type="term" value="C:membrane"/>
    <property type="evidence" value="ECO:0007669"/>
    <property type="project" value="UniProtKB-SubCell"/>
</dbReference>
<dbReference type="GO" id="GO:0020037">
    <property type="term" value="F:heme binding"/>
    <property type="evidence" value="ECO:0007669"/>
    <property type="project" value="InterPro"/>
</dbReference>
<dbReference type="GO" id="GO:0005506">
    <property type="term" value="F:iron ion binding"/>
    <property type="evidence" value="ECO:0007669"/>
    <property type="project" value="InterPro"/>
</dbReference>
<dbReference type="GO" id="GO:0004497">
    <property type="term" value="F:monooxygenase activity"/>
    <property type="evidence" value="ECO:0007669"/>
    <property type="project" value="UniProtKB-KW"/>
</dbReference>
<dbReference type="GO" id="GO:0016705">
    <property type="term" value="F:oxidoreductase activity, acting on paired donors, with incorporation or reduction of molecular oxygen"/>
    <property type="evidence" value="ECO:0007669"/>
    <property type="project" value="InterPro"/>
</dbReference>
<dbReference type="CDD" id="cd11061">
    <property type="entry name" value="CYP67-like"/>
    <property type="match status" value="1"/>
</dbReference>
<dbReference type="Gene3D" id="1.10.630.10">
    <property type="entry name" value="Cytochrome P450"/>
    <property type="match status" value="1"/>
</dbReference>
<dbReference type="InterPro" id="IPR001128">
    <property type="entry name" value="Cyt_P450"/>
</dbReference>
<dbReference type="InterPro" id="IPR002403">
    <property type="entry name" value="Cyt_P450_E_grp-IV"/>
</dbReference>
<dbReference type="InterPro" id="IPR036396">
    <property type="entry name" value="Cyt_P450_sf"/>
</dbReference>
<dbReference type="InterPro" id="IPR050121">
    <property type="entry name" value="Cytochrome_P450_monoxygenase"/>
</dbReference>
<dbReference type="PANTHER" id="PTHR24305">
    <property type="entry name" value="CYTOCHROME P450"/>
    <property type="match status" value="1"/>
</dbReference>
<dbReference type="PANTHER" id="PTHR24305:SF112">
    <property type="entry name" value="L-ORNITHINE-N5-MONOOXYGENASE (EUROFUNG)"/>
    <property type="match status" value="1"/>
</dbReference>
<dbReference type="Pfam" id="PF00067">
    <property type="entry name" value="p450"/>
    <property type="match status" value="1"/>
</dbReference>
<dbReference type="PRINTS" id="PR00465">
    <property type="entry name" value="EP450IV"/>
</dbReference>
<dbReference type="PRINTS" id="PR00385">
    <property type="entry name" value="P450"/>
</dbReference>
<dbReference type="SUPFAM" id="SSF48264">
    <property type="entry name" value="Cytochrome P450"/>
    <property type="match status" value="1"/>
</dbReference>
<keyword id="KW-0325">Glycoprotein</keyword>
<keyword id="KW-0349">Heme</keyword>
<keyword id="KW-0408">Iron</keyword>
<keyword id="KW-0472">Membrane</keyword>
<keyword id="KW-0479">Metal-binding</keyword>
<keyword id="KW-0503">Monooxygenase</keyword>
<keyword id="KW-0560">Oxidoreductase</keyword>
<keyword id="KW-1185">Reference proteome</keyword>
<keyword id="KW-0812">Transmembrane</keyword>
<keyword id="KW-1133">Transmembrane helix</keyword>
<feature type="chain" id="PRO_0000446605" description="Cytochrome P450 monooxygenase lcsK">
    <location>
        <begin position="1"/>
        <end position="548"/>
    </location>
</feature>
<feature type="transmembrane region" description="Helical" evidence="2">
    <location>
        <begin position="28"/>
        <end position="48"/>
    </location>
</feature>
<feature type="transmembrane region" description="Helical" evidence="2">
    <location>
        <begin position="68"/>
        <end position="88"/>
    </location>
</feature>
<feature type="binding site" description="axial binding residue" evidence="1">
    <location>
        <position position="487"/>
    </location>
    <ligand>
        <name>heme</name>
        <dbReference type="ChEBI" id="CHEBI:30413"/>
    </ligand>
    <ligandPart>
        <name>Fe</name>
        <dbReference type="ChEBI" id="CHEBI:18248"/>
    </ligandPart>
</feature>
<feature type="glycosylation site" description="N-linked (GlcNAc...) asparagine" evidence="3">
    <location>
        <position position="172"/>
    </location>
</feature>
<feature type="glycosylation site" description="N-linked (GlcNAc...) asparagine" evidence="3">
    <location>
        <position position="223"/>
    </location>
</feature>
<feature type="glycosylation site" description="N-linked (GlcNAc...) asparagine" evidence="3">
    <location>
        <position position="242"/>
    </location>
</feature>
<feature type="glycosylation site" description="N-linked (GlcNAc...) asparagine" evidence="3">
    <location>
        <position position="404"/>
    </location>
</feature>
<name>LCSK_PURLI</name>
<sequence length="548" mass="61528">MPTSLEQAAALIGGVGTHLLYFKHGERHAYPWRYVALLLAGSLSLWAFKWSREGTTTSILAVTSSTSVLLFLYLGGLAGSVLLYRLFFNPLNRFPGPFAARLSKLYFVYLSSDLRGHRKLHELHQKYGRYVRVGPNDLSVVDPDGMKIVLGANSKCTKSAWYGQDMPYISTNTTRDRAAHDRRRRILAPAFSDKALRGYASRLQKFHDLLTSQIDASAGKPMNVTKWFGYWGMDMMCDIVFNGSFNMLASGETHWALQVVGDGLHLQGFALPPWLYRVFATMPKSSSGSRGLAAFAATQLENRMQQQGKTAHADMMQPLIEHYDRLSTDTKRAILPLLQGDSRMLIVAGSDTTSTTLVHMFYRFCKESGLVDRVREEVEPLVSDPNLISYSDIRQAQLLHACINETLRLHYPGPSGFFRKTPPEGIHIGEQHVPGDTIIQMPPYVMGLDEEVYERCSEFVPERWYSKPEMIKHKDAFLPFLAGSESCIGKNLAYIQLAVVASQIILQFDVAFAPGEDGNKLVRESKDLGMLHPEDLHVVFTRRGKTHS</sequence>
<proteinExistence type="evidence at transcript level"/>
<reference key="1">
    <citation type="journal article" date="2016" name="PLoS Pathog.">
        <title>Biosynthesis of antibiotic leucinostatins in bio-control fungus Purpureocillium lilacinum and their inhibition on phytophthora revealed by genome mining.</title>
        <authorList>
            <person name="Wang G."/>
            <person name="Liu Z."/>
            <person name="Lin R."/>
            <person name="Li E."/>
            <person name="Mao Z."/>
            <person name="Ling J."/>
            <person name="Yang Y."/>
            <person name="Yin W.B."/>
            <person name="Xie B."/>
        </authorList>
    </citation>
    <scope>NUCLEOTIDE SEQUENCE [LARGE SCALE GENOMIC DNA]</scope>
    <scope>IDENTIFICATION</scope>
    <scope>FUNCTION</scope>
    <scope>INDUCTION</scope>
    <scope>PATHWAY</scope>
    <source>
        <strain>PLBJ-1</strain>
    </source>
</reference>
<evidence type="ECO:0000250" key="1">
    <source>
        <dbReference type="UniProtKB" id="P04798"/>
    </source>
</evidence>
<evidence type="ECO:0000255" key="2"/>
<evidence type="ECO:0000255" key="3">
    <source>
        <dbReference type="PROSITE-ProRule" id="PRU00498"/>
    </source>
</evidence>
<evidence type="ECO:0000269" key="4">
    <source>
    </source>
</evidence>
<evidence type="ECO:0000303" key="5">
    <source>
    </source>
</evidence>
<evidence type="ECO:0000305" key="6"/>
<evidence type="ECO:0000305" key="7">
    <source>
    </source>
</evidence>
<gene>
    <name evidence="5" type="primary">lcsK</name>
    <name type="ORF">VFPBJ_02525</name>
    <name type="ORF">VFPFJ_04697</name>
</gene>
<comment type="function">
    <text evidence="4 7">Cytochrome P450 monooxygenase; part of the gene cluster that mediates the biosynthesis of the lipopeptide antibiotics leucinostatins that show extensive biological activities, including antimalarial, antiviral, antibacterial, antifungal, and antitumor activities, as well as phytotoxic (PubMed:27416025). Leucinostatin A contains nine amino acid residues, including the unusual amino acid 4-methyl-L-proline (MePro), 2-amino-6-hydroxy-4-methyl-8-oxodecanoic acid (AHyMeOA), 3-hydroxyleucine (HyLeu), alpha-aminoisobutyric acid (AIB), beta-Ala, a 4-methylhex-2-enoic acid at the N-terminus as well as a N1,N1-dimethylpropane-1,2-diamine (DPD) at the C-terminus (Probable). The biosynthesis of leucinostatins is probably initiated with the assembly of 4-methylhex-2-enoic acid by a reducing PKS. Two reducing polyketide synthases, lcsB and lcsC, have been identified in the cluster and it is not clear which is the one that assembles 4-methylhex-2-enoic acid since both contain KS, AT, DH, cMT, ER, KR and ACP domains (Probable). The polyketide residue might be transferred to the NRPS lcsA, mediated by two additional enzymes, the acyl-CoA ligase lcsD and the thioesterase lcsE. The linear polyketide carboxylic acid, which is released from PKS, is converted to a CoA thioester by lcsD, and then lcsE hydrolyzes the thiol bond and shuttles the polyketide intermediate to lcsA (Probable). The C domain of the first module catalyzed the condensation of 4-methylhex-2-enoic acid and MePro carried by domain A1, followed by successive condensations of nine amino acids to trigger the elongation of the linear peptide. A5 and A6 domains of lcsA are proposed to incorporate leucine, A2 AHyMeOA, and A3 incorporates HyLeu. A4, A7 and A8 incorporate AIB (Probable). The AHyMeOA in leucinostatin A activated by the A2 might be produced by the second PKS (lcsB or lcsC) present within the cluster (Probable). The MePro is probably produced via leucine cyclization and may originate from a separate pathway, independent of the cluster. Another nonproteinogenic amino acid, beta-Ala, could be produced by an aspartic acid decarboxylase also localized outside of the cluster. Two candidates are VFPBJ_01400 and VFPBJ_10476 (Probable). The final peptide scaffold may be released by the NAD(P)H-dependent thioester reductase (TE) at the C-terminal region of lcsA (Probable). Transamination of the lcsA product by the transaminase lcsP may produce DPD at the C-terminus (Probable). Further hydroxylation steps performed alternatively by the cytochrome P450 monooxygenases lcsI, lcsK and lcsN then yield the non-methylated leucinostatins precursor. It is also possible that leucines can be hydroxylated prior to their incorporation into the peptide (Probable). Varying extents of methylation then lead to the formation of leucinostatins A and B (Probable).</text>
</comment>
<comment type="cofactor">
    <cofactor evidence="1">
        <name>heme</name>
        <dbReference type="ChEBI" id="CHEBI:30413"/>
    </cofactor>
</comment>
<comment type="pathway">
    <text evidence="7">Secondary metabolite biosynthesis.</text>
</comment>
<comment type="subcellular location">
    <subcellularLocation>
        <location evidence="2">Membrane</location>
        <topology evidence="2">Multi-pass membrane protein</topology>
    </subcellularLocation>
</comment>
<comment type="induction">
    <text evidence="4">Expression is positively regulated by the leucinostatins biosynthesis cluster-specific transcription regulator lcsF.</text>
</comment>
<comment type="similarity">
    <text evidence="6">Belongs to the cytochrome P450 family.</text>
</comment>
<accession>A0A179HJU2</accession>
<protein>
    <recommendedName>
        <fullName evidence="5">Cytochrome P450 monooxygenase lcsK</fullName>
        <ecNumber evidence="7">1.-.-.-</ecNumber>
    </recommendedName>
    <alternativeName>
        <fullName evidence="5">Leucinostatins biosynthesis cluster protein K</fullName>
    </alternativeName>
</protein>